<comment type="function">
    <text evidence="1">Associates with the EF-Tu.GDP complex and induces the exchange of GDP to GTP. It remains bound to the aminoacyl-tRNA.EF-Tu.GTP complex up to the GTP hydrolysis stage on the ribosome.</text>
</comment>
<comment type="subcellular location">
    <subcellularLocation>
        <location evidence="1">Cytoplasm</location>
    </subcellularLocation>
</comment>
<comment type="similarity">
    <text evidence="1">Belongs to the EF-Ts family.</text>
</comment>
<protein>
    <recommendedName>
        <fullName evidence="1">Elongation factor Ts</fullName>
        <shortName evidence="1">EF-Ts</shortName>
    </recommendedName>
</protein>
<keyword id="KW-0963">Cytoplasm</keyword>
<keyword id="KW-0251">Elongation factor</keyword>
<keyword id="KW-0648">Protein biosynthesis</keyword>
<gene>
    <name evidence="1" type="primary">tsf</name>
    <name type="ordered locus">PSPA7_1484</name>
</gene>
<reference key="1">
    <citation type="submission" date="2007-06" db="EMBL/GenBank/DDBJ databases">
        <authorList>
            <person name="Dodson R.J."/>
            <person name="Harkins D."/>
            <person name="Paulsen I.T."/>
        </authorList>
    </citation>
    <scope>NUCLEOTIDE SEQUENCE [LARGE SCALE GENOMIC DNA]</scope>
    <source>
        <strain>DSM 24068 / PA7</strain>
    </source>
</reference>
<sequence length="289" mass="30653">MAEITAAMVKELRERTGLGMMECKKALTAAGGDIEKAIDDMRAAGAIKAAKKAGNIAAEGSIAVKIAADNKAAVIIEVNSQTDFLALQDDFKGFVAESLEKAFNEKLTDAAPLVEAREEARLALVAKTGENVNIRRLTRVEGDVVGAYLHGHRIGVVVNLKGGNPELAKDIAMHVAASNPQFLSASEVSEEAIAKEKEIFLALNADKIAGKPENIVENMVKGRISKFLAEASLVEQPFVKNPEVKVGDLAKQAGAEIVSFVRYEVGEGIEKAEVDFAAEVAAQVAATKQ</sequence>
<proteinExistence type="inferred from homology"/>
<feature type="chain" id="PRO_1000006151" description="Elongation factor Ts">
    <location>
        <begin position="1"/>
        <end position="289"/>
    </location>
</feature>
<feature type="region of interest" description="Involved in Mg(2+) ion dislocation from EF-Tu" evidence="1">
    <location>
        <begin position="82"/>
        <end position="85"/>
    </location>
</feature>
<organism>
    <name type="scientific">Pseudomonas paraeruginosa (strain DSM 24068 / PA7)</name>
    <name type="common">Pseudomonas aeruginosa (strain PA7)</name>
    <dbReference type="NCBI Taxonomy" id="381754"/>
    <lineage>
        <taxon>Bacteria</taxon>
        <taxon>Pseudomonadati</taxon>
        <taxon>Pseudomonadota</taxon>
        <taxon>Gammaproteobacteria</taxon>
        <taxon>Pseudomonadales</taxon>
        <taxon>Pseudomonadaceae</taxon>
        <taxon>Pseudomonas</taxon>
        <taxon>Pseudomonas paraeruginosa</taxon>
    </lineage>
</organism>
<evidence type="ECO:0000255" key="1">
    <source>
        <dbReference type="HAMAP-Rule" id="MF_00050"/>
    </source>
</evidence>
<accession>A6V1D3</accession>
<name>EFTS_PSEP7</name>
<dbReference type="EMBL" id="CP000744">
    <property type="protein sequence ID" value="ABR83243.1"/>
    <property type="molecule type" value="Genomic_DNA"/>
</dbReference>
<dbReference type="RefSeq" id="WP_003092393.1">
    <property type="nucleotide sequence ID" value="NC_009656.1"/>
</dbReference>
<dbReference type="SMR" id="A6V1D3"/>
<dbReference type="GeneID" id="77219864"/>
<dbReference type="KEGG" id="pap:PSPA7_1484"/>
<dbReference type="HOGENOM" id="CLU_047155_0_2_6"/>
<dbReference type="Proteomes" id="UP000001582">
    <property type="component" value="Chromosome"/>
</dbReference>
<dbReference type="GO" id="GO:0005737">
    <property type="term" value="C:cytoplasm"/>
    <property type="evidence" value="ECO:0007669"/>
    <property type="project" value="UniProtKB-SubCell"/>
</dbReference>
<dbReference type="GO" id="GO:0003746">
    <property type="term" value="F:translation elongation factor activity"/>
    <property type="evidence" value="ECO:0007669"/>
    <property type="project" value="UniProtKB-UniRule"/>
</dbReference>
<dbReference type="CDD" id="cd14275">
    <property type="entry name" value="UBA_EF-Ts"/>
    <property type="match status" value="1"/>
</dbReference>
<dbReference type="FunFam" id="1.10.286.20:FF:000001">
    <property type="entry name" value="Elongation factor Ts"/>
    <property type="match status" value="1"/>
</dbReference>
<dbReference type="FunFam" id="1.10.8.10:FF:000001">
    <property type="entry name" value="Elongation factor Ts"/>
    <property type="match status" value="1"/>
</dbReference>
<dbReference type="Gene3D" id="1.10.286.20">
    <property type="match status" value="1"/>
</dbReference>
<dbReference type="Gene3D" id="1.10.8.10">
    <property type="entry name" value="DNA helicase RuvA subunit, C-terminal domain"/>
    <property type="match status" value="1"/>
</dbReference>
<dbReference type="Gene3D" id="3.30.479.20">
    <property type="entry name" value="Elongation factor Ts, dimerisation domain"/>
    <property type="match status" value="2"/>
</dbReference>
<dbReference type="HAMAP" id="MF_00050">
    <property type="entry name" value="EF_Ts"/>
    <property type="match status" value="1"/>
</dbReference>
<dbReference type="InterPro" id="IPR036402">
    <property type="entry name" value="EF-Ts_dimer_sf"/>
</dbReference>
<dbReference type="InterPro" id="IPR001816">
    <property type="entry name" value="Transl_elong_EFTs/EF1B"/>
</dbReference>
<dbReference type="InterPro" id="IPR014039">
    <property type="entry name" value="Transl_elong_EFTs/EF1B_dimer"/>
</dbReference>
<dbReference type="InterPro" id="IPR018101">
    <property type="entry name" value="Transl_elong_Ts_CS"/>
</dbReference>
<dbReference type="InterPro" id="IPR009060">
    <property type="entry name" value="UBA-like_sf"/>
</dbReference>
<dbReference type="NCBIfam" id="TIGR00116">
    <property type="entry name" value="tsf"/>
    <property type="match status" value="1"/>
</dbReference>
<dbReference type="PANTHER" id="PTHR11741">
    <property type="entry name" value="ELONGATION FACTOR TS"/>
    <property type="match status" value="1"/>
</dbReference>
<dbReference type="PANTHER" id="PTHR11741:SF0">
    <property type="entry name" value="ELONGATION FACTOR TS, MITOCHONDRIAL"/>
    <property type="match status" value="1"/>
</dbReference>
<dbReference type="Pfam" id="PF00889">
    <property type="entry name" value="EF_TS"/>
    <property type="match status" value="1"/>
</dbReference>
<dbReference type="SUPFAM" id="SSF54713">
    <property type="entry name" value="Elongation factor Ts (EF-Ts), dimerisation domain"/>
    <property type="match status" value="2"/>
</dbReference>
<dbReference type="SUPFAM" id="SSF46934">
    <property type="entry name" value="UBA-like"/>
    <property type="match status" value="1"/>
</dbReference>
<dbReference type="PROSITE" id="PS01126">
    <property type="entry name" value="EF_TS_1"/>
    <property type="match status" value="1"/>
</dbReference>
<dbReference type="PROSITE" id="PS01127">
    <property type="entry name" value="EF_TS_2"/>
    <property type="match status" value="1"/>
</dbReference>